<gene>
    <name evidence="1" type="primary">rplO</name>
    <name type="ordered locus">UTI89_C3747</name>
</gene>
<keyword id="KW-0687">Ribonucleoprotein</keyword>
<keyword id="KW-0689">Ribosomal protein</keyword>
<keyword id="KW-0694">RNA-binding</keyword>
<keyword id="KW-0699">rRNA-binding</keyword>
<comment type="function">
    <text evidence="1">Binds to the 23S rRNA.</text>
</comment>
<comment type="subunit">
    <text evidence="1">Part of the 50S ribosomal subunit.</text>
</comment>
<comment type="similarity">
    <text evidence="1">Belongs to the universal ribosomal protein uL15 family.</text>
</comment>
<dbReference type="EMBL" id="CP000243">
    <property type="protein sequence ID" value="ABE09184.1"/>
    <property type="molecule type" value="Genomic_DNA"/>
</dbReference>
<dbReference type="RefSeq" id="WP_001238917.1">
    <property type="nucleotide sequence ID" value="NZ_CP064825.1"/>
</dbReference>
<dbReference type="EMDB" id="EMD-29620"/>
<dbReference type="EMDB" id="EMD-29627"/>
<dbReference type="EMDB" id="EMD-29631"/>
<dbReference type="SMR" id="Q1R630"/>
<dbReference type="GeneID" id="93778686"/>
<dbReference type="KEGG" id="eci:UTI89_C3747"/>
<dbReference type="HOGENOM" id="CLU_055188_4_2_6"/>
<dbReference type="Proteomes" id="UP000001952">
    <property type="component" value="Chromosome"/>
</dbReference>
<dbReference type="GO" id="GO:0022625">
    <property type="term" value="C:cytosolic large ribosomal subunit"/>
    <property type="evidence" value="ECO:0007669"/>
    <property type="project" value="TreeGrafter"/>
</dbReference>
<dbReference type="GO" id="GO:0019843">
    <property type="term" value="F:rRNA binding"/>
    <property type="evidence" value="ECO:0007669"/>
    <property type="project" value="UniProtKB-UniRule"/>
</dbReference>
<dbReference type="GO" id="GO:0003735">
    <property type="term" value="F:structural constituent of ribosome"/>
    <property type="evidence" value="ECO:0007669"/>
    <property type="project" value="InterPro"/>
</dbReference>
<dbReference type="GO" id="GO:0006412">
    <property type="term" value="P:translation"/>
    <property type="evidence" value="ECO:0007669"/>
    <property type="project" value="UniProtKB-UniRule"/>
</dbReference>
<dbReference type="FunFam" id="3.100.10.10:FF:000003">
    <property type="entry name" value="50S ribosomal protein L15"/>
    <property type="match status" value="1"/>
</dbReference>
<dbReference type="Gene3D" id="3.100.10.10">
    <property type="match status" value="1"/>
</dbReference>
<dbReference type="HAMAP" id="MF_01341">
    <property type="entry name" value="Ribosomal_uL15"/>
    <property type="match status" value="1"/>
</dbReference>
<dbReference type="InterPro" id="IPR030878">
    <property type="entry name" value="Ribosomal_uL15"/>
</dbReference>
<dbReference type="InterPro" id="IPR021131">
    <property type="entry name" value="Ribosomal_uL15/eL18"/>
</dbReference>
<dbReference type="InterPro" id="IPR036227">
    <property type="entry name" value="Ribosomal_uL15/eL18_sf"/>
</dbReference>
<dbReference type="InterPro" id="IPR005749">
    <property type="entry name" value="Ribosomal_uL15_bac-type"/>
</dbReference>
<dbReference type="InterPro" id="IPR001196">
    <property type="entry name" value="Ribosomal_uL15_CS"/>
</dbReference>
<dbReference type="NCBIfam" id="TIGR01071">
    <property type="entry name" value="rplO_bact"/>
    <property type="match status" value="1"/>
</dbReference>
<dbReference type="PANTHER" id="PTHR12934">
    <property type="entry name" value="50S RIBOSOMAL PROTEIN L15"/>
    <property type="match status" value="1"/>
</dbReference>
<dbReference type="PANTHER" id="PTHR12934:SF11">
    <property type="entry name" value="LARGE RIBOSOMAL SUBUNIT PROTEIN UL15M"/>
    <property type="match status" value="1"/>
</dbReference>
<dbReference type="Pfam" id="PF00828">
    <property type="entry name" value="Ribosomal_L27A"/>
    <property type="match status" value="1"/>
</dbReference>
<dbReference type="SUPFAM" id="SSF52080">
    <property type="entry name" value="Ribosomal proteins L15p and L18e"/>
    <property type="match status" value="1"/>
</dbReference>
<dbReference type="PROSITE" id="PS00475">
    <property type="entry name" value="RIBOSOMAL_L15"/>
    <property type="match status" value="1"/>
</dbReference>
<evidence type="ECO:0000255" key="1">
    <source>
        <dbReference type="HAMAP-Rule" id="MF_01341"/>
    </source>
</evidence>
<evidence type="ECO:0000256" key="2">
    <source>
        <dbReference type="SAM" id="MobiDB-lite"/>
    </source>
</evidence>
<evidence type="ECO:0000305" key="3"/>
<organism>
    <name type="scientific">Escherichia coli (strain UTI89 / UPEC)</name>
    <dbReference type="NCBI Taxonomy" id="364106"/>
    <lineage>
        <taxon>Bacteria</taxon>
        <taxon>Pseudomonadati</taxon>
        <taxon>Pseudomonadota</taxon>
        <taxon>Gammaproteobacteria</taxon>
        <taxon>Enterobacterales</taxon>
        <taxon>Enterobacteriaceae</taxon>
        <taxon>Escherichia</taxon>
    </lineage>
</organism>
<protein>
    <recommendedName>
        <fullName evidence="1">Large ribosomal subunit protein uL15</fullName>
    </recommendedName>
    <alternativeName>
        <fullName evidence="3">50S ribosomal protein L15</fullName>
    </alternativeName>
</protein>
<proteinExistence type="inferred from homology"/>
<sequence length="144" mass="14966">MRLNTLSPAEGSKKAGKRLGRGIGSGLGKTGGRGHKGQKSRSGGGVRRGFEGGQMPLYRRLPKFGFTSRKAAITAEVRLSDLAKVEGGVVDLNTLKAANIIGIQIEFAKVILAGEVTTPVTVRGLRVTKGARAAIEAAGGKIEE</sequence>
<name>RL15_ECOUT</name>
<feature type="chain" id="PRO_0000251512" description="Large ribosomal subunit protein uL15">
    <location>
        <begin position="1"/>
        <end position="144"/>
    </location>
</feature>
<feature type="region of interest" description="Disordered" evidence="2">
    <location>
        <begin position="1"/>
        <end position="54"/>
    </location>
</feature>
<feature type="compositionally biased region" description="Gly residues" evidence="2">
    <location>
        <begin position="21"/>
        <end position="31"/>
    </location>
</feature>
<reference key="1">
    <citation type="journal article" date="2006" name="Proc. Natl. Acad. Sci. U.S.A.">
        <title>Identification of genes subject to positive selection in uropathogenic strains of Escherichia coli: a comparative genomics approach.</title>
        <authorList>
            <person name="Chen S.L."/>
            <person name="Hung C.-S."/>
            <person name="Xu J."/>
            <person name="Reigstad C.S."/>
            <person name="Magrini V."/>
            <person name="Sabo A."/>
            <person name="Blasiar D."/>
            <person name="Bieri T."/>
            <person name="Meyer R.R."/>
            <person name="Ozersky P."/>
            <person name="Armstrong J.R."/>
            <person name="Fulton R.S."/>
            <person name="Latreille J.P."/>
            <person name="Spieth J."/>
            <person name="Hooton T.M."/>
            <person name="Mardis E.R."/>
            <person name="Hultgren S.J."/>
            <person name="Gordon J.I."/>
        </authorList>
    </citation>
    <scope>NUCLEOTIDE SEQUENCE [LARGE SCALE GENOMIC DNA]</scope>
    <source>
        <strain>UTI89 / UPEC</strain>
    </source>
</reference>
<accession>Q1R630</accession>